<sequence length="130" mass="15703">MNEREFKRLLKVRARLKRKKPRFLRQEWWRYPKFKNDPKWRRPKGIDSKMRLKLKGKPRSPSIGWSSPRLVRGLHPSGYEEVLIHNVKELERLDPRRQAARIAHTVGKKKRIEILKRAEELGIKVLNPRL</sequence>
<reference key="1">
    <citation type="journal article" date="1998" name="DNA Res.">
        <title>Complete sequence and gene organization of the genome of a hyper-thermophilic archaebacterium, Pyrococcus horikoshii OT3.</title>
        <authorList>
            <person name="Kawarabayasi Y."/>
            <person name="Sawada M."/>
            <person name="Horikawa H."/>
            <person name="Haikawa Y."/>
            <person name="Hino Y."/>
            <person name="Yamamoto S."/>
            <person name="Sekine M."/>
            <person name="Baba S."/>
            <person name="Kosugi H."/>
            <person name="Hosoyama A."/>
            <person name="Nagai Y."/>
            <person name="Sakai M."/>
            <person name="Ogura K."/>
            <person name="Otsuka R."/>
            <person name="Nakazawa H."/>
            <person name="Takamiya M."/>
            <person name="Ohfuku Y."/>
            <person name="Funahashi T."/>
            <person name="Tanaka T."/>
            <person name="Kudoh Y."/>
            <person name="Yamazaki J."/>
            <person name="Kushida N."/>
            <person name="Oguchi A."/>
            <person name="Aoki K."/>
            <person name="Yoshizawa T."/>
            <person name="Nakamura Y."/>
            <person name="Robb F.T."/>
            <person name="Horikoshi K."/>
            <person name="Masuchi Y."/>
            <person name="Shizuya H."/>
            <person name="Kikuchi H."/>
        </authorList>
    </citation>
    <scope>NUCLEOTIDE SEQUENCE [LARGE SCALE GENOMIC DNA]</scope>
    <source>
        <strain>ATCC 700860 / DSM 12428 / JCM 9974 / NBRC 100139 / OT-3</strain>
    </source>
</reference>
<feature type="chain" id="PRO_0000131162" description="Large ribosomal subunit protein eL32">
    <location>
        <begin position="1"/>
        <end position="130"/>
    </location>
</feature>
<organism>
    <name type="scientific">Pyrococcus horikoshii (strain ATCC 700860 / DSM 12428 / JCM 9974 / NBRC 100139 / OT-3)</name>
    <dbReference type="NCBI Taxonomy" id="70601"/>
    <lineage>
        <taxon>Archaea</taxon>
        <taxon>Methanobacteriati</taxon>
        <taxon>Methanobacteriota</taxon>
        <taxon>Thermococci</taxon>
        <taxon>Thermococcales</taxon>
        <taxon>Thermococcaceae</taxon>
        <taxon>Pyrococcus</taxon>
    </lineage>
</organism>
<accession>O59435</accession>
<keyword id="KW-0687">Ribonucleoprotein</keyword>
<keyword id="KW-0689">Ribosomal protein</keyword>
<comment type="similarity">
    <text evidence="1">Belongs to the eukaryotic ribosomal protein eL32 family.</text>
</comment>
<name>RL32_PYRHO</name>
<protein>
    <recommendedName>
        <fullName evidence="1">Large ribosomal subunit protein eL32</fullName>
    </recommendedName>
    <alternativeName>
        <fullName>50S ribosomal protein L32e</fullName>
    </alternativeName>
</protein>
<dbReference type="EMBL" id="BA000001">
    <property type="protein sequence ID" value="BAA30875.1"/>
    <property type="molecule type" value="Genomic_DNA"/>
</dbReference>
<dbReference type="PIR" id="D71185">
    <property type="entry name" value="D71185"/>
</dbReference>
<dbReference type="RefSeq" id="WP_010885824.1">
    <property type="nucleotide sequence ID" value="NC_000961.1"/>
</dbReference>
<dbReference type="SMR" id="O59435"/>
<dbReference type="STRING" id="70601.gene:9378758"/>
<dbReference type="EnsemblBacteria" id="BAA30875">
    <property type="protein sequence ID" value="BAA30875"/>
    <property type="gene ID" value="BAA30875"/>
</dbReference>
<dbReference type="GeneID" id="1442605"/>
<dbReference type="KEGG" id="pho:PH1761"/>
<dbReference type="eggNOG" id="arCOG00781">
    <property type="taxonomic scope" value="Archaea"/>
</dbReference>
<dbReference type="OrthoDB" id="372100at2157"/>
<dbReference type="Proteomes" id="UP000000752">
    <property type="component" value="Chromosome"/>
</dbReference>
<dbReference type="GO" id="GO:0022625">
    <property type="term" value="C:cytosolic large ribosomal subunit"/>
    <property type="evidence" value="ECO:0007669"/>
    <property type="project" value="TreeGrafter"/>
</dbReference>
<dbReference type="GO" id="GO:0003735">
    <property type="term" value="F:structural constituent of ribosome"/>
    <property type="evidence" value="ECO:0007669"/>
    <property type="project" value="InterPro"/>
</dbReference>
<dbReference type="GO" id="GO:0006412">
    <property type="term" value="P:translation"/>
    <property type="evidence" value="ECO:0007669"/>
    <property type="project" value="UniProtKB-UniRule"/>
</dbReference>
<dbReference type="CDD" id="cd00513">
    <property type="entry name" value="Ribosomal_L32_L32e"/>
    <property type="match status" value="1"/>
</dbReference>
<dbReference type="HAMAP" id="MF_00810">
    <property type="entry name" value="Ribosomal_eL32"/>
    <property type="match status" value="1"/>
</dbReference>
<dbReference type="InterPro" id="IPR001515">
    <property type="entry name" value="Ribosomal_eL32"/>
</dbReference>
<dbReference type="InterPro" id="IPR023654">
    <property type="entry name" value="Ribosomal_eL32_arc"/>
</dbReference>
<dbReference type="InterPro" id="IPR018263">
    <property type="entry name" value="Ribosomal_eL32_CS"/>
</dbReference>
<dbReference type="InterPro" id="IPR036351">
    <property type="entry name" value="Ribosomal_eL32_sf"/>
</dbReference>
<dbReference type="NCBIfam" id="NF006332">
    <property type="entry name" value="PRK08562.1"/>
    <property type="match status" value="1"/>
</dbReference>
<dbReference type="PANTHER" id="PTHR23413">
    <property type="entry name" value="60S RIBOSOMAL PROTEIN L32 AND DNA-DIRECTED RNA POLYMERASE II, SUBUNIT N"/>
    <property type="match status" value="1"/>
</dbReference>
<dbReference type="PANTHER" id="PTHR23413:SF1">
    <property type="entry name" value="RIBOSOMAL PROTEIN L32"/>
    <property type="match status" value="1"/>
</dbReference>
<dbReference type="Pfam" id="PF01655">
    <property type="entry name" value="Ribosomal_L32e"/>
    <property type="match status" value="1"/>
</dbReference>
<dbReference type="SMART" id="SM01393">
    <property type="entry name" value="Ribosomal_L32e"/>
    <property type="match status" value="1"/>
</dbReference>
<dbReference type="SUPFAM" id="SSF52042">
    <property type="entry name" value="Ribosomal protein L32e"/>
    <property type="match status" value="1"/>
</dbReference>
<dbReference type="PROSITE" id="PS00580">
    <property type="entry name" value="RIBOSOMAL_L32E"/>
    <property type="match status" value="1"/>
</dbReference>
<gene>
    <name type="primary">rpl32e</name>
    <name type="ordered locus">PH1761</name>
</gene>
<proteinExistence type="inferred from homology"/>
<evidence type="ECO:0000305" key="1"/>